<sequence length="439" mass="49986">MEGGLRTGRLPKAPELSLQSFPSEWSWVWTYPLFHKLAAFACHASQAWLTVGITSESREGPNGLLDTLASLYHTSSTSEQKQMTVLVHLADSDPTWLRRTIIRISSLYRSQILTGQLLLIHAPPDAYPAVNDAQNKVSRGQIYSKQNVDHAFLMSFATKLSTYFLLIEDNVFCAPNFVNHIRSKVGYRKPNTWVLLEFSNMGFLGKLLHSRDLPLLAHFLLLFHKERPLNWLLLHFRTLLGQQSSILCRPFLFYHRLTHLTFENKTLIGHEKDPPDPYTLSGTVYTDMRFSDTHSPQEAYTLDESFFWSYNVTTGNYLTVILNNPANLNRVQVRTGSITDGKYILEKGQVELGYDPEGTPPQCTSFTLLGRLVQGQMDQFILESIGYKVSCVKLAVNANQVGGLMIRHIYIWGENAKNRKDVQIDNDDDDDDDDYDDDS</sequence>
<keyword id="KW-0025">Alternative splicing</keyword>
<keyword id="KW-0328">Glycosyltransferase</keyword>
<keyword id="KW-1185">Reference proteome</keyword>
<keyword id="KW-0808">Transferase</keyword>
<reference key="1">
    <citation type="journal article" date="2005" name="Science">
        <title>The transcriptional landscape of the mammalian genome.</title>
        <authorList>
            <person name="Carninci P."/>
            <person name="Kasukawa T."/>
            <person name="Katayama S."/>
            <person name="Gough J."/>
            <person name="Frith M.C."/>
            <person name="Maeda N."/>
            <person name="Oyama R."/>
            <person name="Ravasi T."/>
            <person name="Lenhard B."/>
            <person name="Wells C."/>
            <person name="Kodzius R."/>
            <person name="Shimokawa K."/>
            <person name="Bajic V.B."/>
            <person name="Brenner S.E."/>
            <person name="Batalov S."/>
            <person name="Forrest A.R."/>
            <person name="Zavolan M."/>
            <person name="Davis M.J."/>
            <person name="Wilming L.G."/>
            <person name="Aidinis V."/>
            <person name="Allen J.E."/>
            <person name="Ambesi-Impiombato A."/>
            <person name="Apweiler R."/>
            <person name="Aturaliya R.N."/>
            <person name="Bailey T.L."/>
            <person name="Bansal M."/>
            <person name="Baxter L."/>
            <person name="Beisel K.W."/>
            <person name="Bersano T."/>
            <person name="Bono H."/>
            <person name="Chalk A.M."/>
            <person name="Chiu K.P."/>
            <person name="Choudhary V."/>
            <person name="Christoffels A."/>
            <person name="Clutterbuck D.R."/>
            <person name="Crowe M.L."/>
            <person name="Dalla E."/>
            <person name="Dalrymple B.P."/>
            <person name="de Bono B."/>
            <person name="Della Gatta G."/>
            <person name="di Bernardo D."/>
            <person name="Down T."/>
            <person name="Engstrom P."/>
            <person name="Fagiolini M."/>
            <person name="Faulkner G."/>
            <person name="Fletcher C.F."/>
            <person name="Fukushima T."/>
            <person name="Furuno M."/>
            <person name="Futaki S."/>
            <person name="Gariboldi M."/>
            <person name="Georgii-Hemming P."/>
            <person name="Gingeras T.R."/>
            <person name="Gojobori T."/>
            <person name="Green R.E."/>
            <person name="Gustincich S."/>
            <person name="Harbers M."/>
            <person name="Hayashi Y."/>
            <person name="Hensch T.K."/>
            <person name="Hirokawa N."/>
            <person name="Hill D."/>
            <person name="Huminiecki L."/>
            <person name="Iacono M."/>
            <person name="Ikeo K."/>
            <person name="Iwama A."/>
            <person name="Ishikawa T."/>
            <person name="Jakt M."/>
            <person name="Kanapin A."/>
            <person name="Katoh M."/>
            <person name="Kawasawa Y."/>
            <person name="Kelso J."/>
            <person name="Kitamura H."/>
            <person name="Kitano H."/>
            <person name="Kollias G."/>
            <person name="Krishnan S.P."/>
            <person name="Kruger A."/>
            <person name="Kummerfeld S.K."/>
            <person name="Kurochkin I.V."/>
            <person name="Lareau L.F."/>
            <person name="Lazarevic D."/>
            <person name="Lipovich L."/>
            <person name="Liu J."/>
            <person name="Liuni S."/>
            <person name="McWilliam S."/>
            <person name="Madan Babu M."/>
            <person name="Madera M."/>
            <person name="Marchionni L."/>
            <person name="Matsuda H."/>
            <person name="Matsuzawa S."/>
            <person name="Miki H."/>
            <person name="Mignone F."/>
            <person name="Miyake S."/>
            <person name="Morris K."/>
            <person name="Mottagui-Tabar S."/>
            <person name="Mulder N."/>
            <person name="Nakano N."/>
            <person name="Nakauchi H."/>
            <person name="Ng P."/>
            <person name="Nilsson R."/>
            <person name="Nishiguchi S."/>
            <person name="Nishikawa S."/>
            <person name="Nori F."/>
            <person name="Ohara O."/>
            <person name="Okazaki Y."/>
            <person name="Orlando V."/>
            <person name="Pang K.C."/>
            <person name="Pavan W.J."/>
            <person name="Pavesi G."/>
            <person name="Pesole G."/>
            <person name="Petrovsky N."/>
            <person name="Piazza S."/>
            <person name="Reed J."/>
            <person name="Reid J.F."/>
            <person name="Ring B.Z."/>
            <person name="Ringwald M."/>
            <person name="Rost B."/>
            <person name="Ruan Y."/>
            <person name="Salzberg S.L."/>
            <person name="Sandelin A."/>
            <person name="Schneider C."/>
            <person name="Schoenbach C."/>
            <person name="Sekiguchi K."/>
            <person name="Semple C.A."/>
            <person name="Seno S."/>
            <person name="Sessa L."/>
            <person name="Sheng Y."/>
            <person name="Shibata Y."/>
            <person name="Shimada H."/>
            <person name="Shimada K."/>
            <person name="Silva D."/>
            <person name="Sinclair B."/>
            <person name="Sperling S."/>
            <person name="Stupka E."/>
            <person name="Sugiura K."/>
            <person name="Sultana R."/>
            <person name="Takenaka Y."/>
            <person name="Taki K."/>
            <person name="Tammoja K."/>
            <person name="Tan S.L."/>
            <person name="Tang S."/>
            <person name="Taylor M.S."/>
            <person name="Tegner J."/>
            <person name="Teichmann S.A."/>
            <person name="Ueda H.R."/>
            <person name="van Nimwegen E."/>
            <person name="Verardo R."/>
            <person name="Wei C.L."/>
            <person name="Yagi K."/>
            <person name="Yamanishi H."/>
            <person name="Zabarovsky E."/>
            <person name="Zhu S."/>
            <person name="Zimmer A."/>
            <person name="Hide W."/>
            <person name="Bult C."/>
            <person name="Grimmond S.M."/>
            <person name="Teasdale R.D."/>
            <person name="Liu E.T."/>
            <person name="Brusic V."/>
            <person name="Quackenbush J."/>
            <person name="Wahlestedt C."/>
            <person name="Mattick J.S."/>
            <person name="Hume D.A."/>
            <person name="Kai C."/>
            <person name="Sasaki D."/>
            <person name="Tomaru Y."/>
            <person name="Fukuda S."/>
            <person name="Kanamori-Katayama M."/>
            <person name="Suzuki M."/>
            <person name="Aoki J."/>
            <person name="Arakawa T."/>
            <person name="Iida J."/>
            <person name="Imamura K."/>
            <person name="Itoh M."/>
            <person name="Kato T."/>
            <person name="Kawaji H."/>
            <person name="Kawagashira N."/>
            <person name="Kawashima T."/>
            <person name="Kojima M."/>
            <person name="Kondo S."/>
            <person name="Konno H."/>
            <person name="Nakano K."/>
            <person name="Ninomiya N."/>
            <person name="Nishio T."/>
            <person name="Okada M."/>
            <person name="Plessy C."/>
            <person name="Shibata K."/>
            <person name="Shiraki T."/>
            <person name="Suzuki S."/>
            <person name="Tagami M."/>
            <person name="Waki K."/>
            <person name="Watahiki A."/>
            <person name="Okamura-Oho Y."/>
            <person name="Suzuki H."/>
            <person name="Kawai J."/>
            <person name="Hayashizaki Y."/>
        </authorList>
    </citation>
    <scope>NUCLEOTIDE SEQUENCE [LARGE SCALE MRNA] (ISOFORM 1)</scope>
</reference>
<reference key="2">
    <citation type="journal article" date="2009" name="PLoS Biol.">
        <title>Lineage-specific biology revealed by a finished genome assembly of the mouse.</title>
        <authorList>
            <person name="Church D.M."/>
            <person name="Goodstadt L."/>
            <person name="Hillier L.W."/>
            <person name="Zody M.C."/>
            <person name="Goldstein S."/>
            <person name="She X."/>
            <person name="Bult C.J."/>
            <person name="Agarwala R."/>
            <person name="Cherry J.L."/>
            <person name="DiCuccio M."/>
            <person name="Hlavina W."/>
            <person name="Kapustin Y."/>
            <person name="Meric P."/>
            <person name="Maglott D."/>
            <person name="Birtle Z."/>
            <person name="Marques A.C."/>
            <person name="Graves T."/>
            <person name="Zhou S."/>
            <person name="Teague B."/>
            <person name="Potamousis K."/>
            <person name="Churas C."/>
            <person name="Place M."/>
            <person name="Herschleb J."/>
            <person name="Runnheim R."/>
            <person name="Forrest D."/>
            <person name="Amos-Landgraf J."/>
            <person name="Schwartz D.C."/>
            <person name="Cheng Z."/>
            <person name="Lindblad-Toh K."/>
            <person name="Eichler E.E."/>
            <person name="Ponting C.P."/>
        </authorList>
    </citation>
    <scope>NUCLEOTIDE SEQUENCE [LARGE SCALE GENOMIC DNA]</scope>
    <source>
        <strain>C57BL/6J</strain>
    </source>
</reference>
<reference key="3">
    <citation type="journal article" date="2004" name="Genome Res.">
        <title>The status, quality, and expansion of the NIH full-length cDNA project: the Mammalian Gene Collection (MGC).</title>
        <authorList>
            <consortium name="The MGC Project Team"/>
        </authorList>
    </citation>
    <scope>NUCLEOTIDE SEQUENCE [LARGE SCALE MRNA] (ISOFORM 2)</scope>
    <source>
        <tissue>Brain</tissue>
    </source>
</reference>
<gene>
    <name evidence="4" type="primary">Mgat4e</name>
</gene>
<name>MGT4E_MOUSE</name>
<feature type="chain" id="PRO_0000325757" description="Alpha-1,3-mannosyl-glycoprotein 4-beta-N-acetylglucosaminyltransferase-like protein MGAT4E" evidence="3">
    <location>
        <begin position="1"/>
        <end position="439"/>
    </location>
</feature>
<feature type="splice variant" id="VSP_054935" description="In isoform 2." evidence="2">
    <location>
        <begin position="1"/>
        <end position="82"/>
    </location>
</feature>
<feature type="sequence conflict" description="In Ref. 1; BAC25485." evidence="3" ref="1">
    <original>L</original>
    <variation>M</variation>
    <location>
        <position position="89"/>
    </location>
</feature>
<feature type="sequence conflict" description="In Ref. 1; BAC25485." evidence="3" ref="1">
    <original>R</original>
    <variation>Q</variation>
    <location>
        <position position="139"/>
    </location>
</feature>
<feature type="sequence conflict" description="In Ref. 1; BAC25485." evidence="3" ref="1">
    <original>KQ</original>
    <variation>QH</variation>
    <location>
        <begin position="145"/>
        <end position="146"/>
    </location>
</feature>
<feature type="sequence conflict" description="In Ref. 1; BAC25485." evidence="3" ref="1">
    <original>K</original>
    <variation>Q</variation>
    <location>
        <position position="159"/>
    </location>
</feature>
<feature type="sequence conflict" description="In Ref. 1; BAC25485." evidence="3" ref="1">
    <original>L</original>
    <variation>F</variation>
    <location>
        <position position="165"/>
    </location>
</feature>
<feature type="sequence conflict" description="In Ref. 1; BAC25485." evidence="3" ref="1">
    <original>NF</original>
    <variation>TS</variation>
    <location>
        <begin position="176"/>
        <end position="177"/>
    </location>
</feature>
<feature type="sequence conflict" description="In Ref. 1; BAC25485." evidence="3" ref="1">
    <original>L</original>
    <variation>S</variation>
    <location>
        <position position="208"/>
    </location>
</feature>
<feature type="sequence conflict" description="In Ref. 1; BAC25485." evidence="3" ref="1">
    <original>P</original>
    <variation>Q</variation>
    <location>
        <position position="214"/>
    </location>
</feature>
<feature type="sequence conflict" description="In Ref. 3; AAI45150/AAI45787." evidence="3" ref="3">
    <location>
        <begin position="436"/>
        <end position="437"/>
    </location>
</feature>
<evidence type="ECO:0000250" key="1"/>
<evidence type="ECO:0000303" key="2">
    <source>
    </source>
</evidence>
<evidence type="ECO:0000305" key="3"/>
<evidence type="ECO:0000312" key="4">
    <source>
        <dbReference type="MGI" id="MGI:1918251"/>
    </source>
</evidence>
<accession>A6H684</accession>
<accession>B7ZNB9</accession>
<accession>E9Q5L0</accession>
<accession>Q8C1J0</accession>
<comment type="function">
    <text evidence="1">Glycosyltransferase-like protein that may participate in the transfer of N-acetylglucosamine (GlcNAc) to the core mannose residues of N-linked glycans.</text>
</comment>
<comment type="pathway">
    <text>Protein modification; protein glycosylation.</text>
</comment>
<comment type="alternative products">
    <event type="alternative splicing"/>
    <isoform>
        <id>A6H684-1</id>
        <name>1</name>
        <sequence type="displayed"/>
    </isoform>
    <isoform>
        <id>A6H684-2</id>
        <name>2</name>
        <sequence type="described" ref="VSP_054935"/>
    </isoform>
</comment>
<comment type="sequence caution" evidence="3">
    <conflict type="erroneous initiation">
        <sequence resource="EMBL-CDS" id="AAI45150"/>
    </conflict>
    <text>Truncated N-terminus.</text>
</comment>
<comment type="sequence caution" evidence="3">
    <conflict type="erroneous initiation">
        <sequence resource="EMBL-CDS" id="BAC25485"/>
    </conflict>
    <text>Truncated N-terminus.</text>
</comment>
<comment type="sequence caution" evidence="3">
    <conflict type="frameshift">
        <sequence resource="EMBL-CDS" id="BAC25485"/>
    </conflict>
</comment>
<organism>
    <name type="scientific">Mus musculus</name>
    <name type="common">Mouse</name>
    <dbReference type="NCBI Taxonomy" id="10090"/>
    <lineage>
        <taxon>Eukaryota</taxon>
        <taxon>Metazoa</taxon>
        <taxon>Chordata</taxon>
        <taxon>Craniata</taxon>
        <taxon>Vertebrata</taxon>
        <taxon>Euteleostomi</taxon>
        <taxon>Mammalia</taxon>
        <taxon>Eutheria</taxon>
        <taxon>Euarchontoglires</taxon>
        <taxon>Glires</taxon>
        <taxon>Rodentia</taxon>
        <taxon>Myomorpha</taxon>
        <taxon>Muroidea</taxon>
        <taxon>Muridae</taxon>
        <taxon>Murinae</taxon>
        <taxon>Mus</taxon>
        <taxon>Mus</taxon>
    </lineage>
</organism>
<dbReference type="EC" id="2.4.1.-"/>
<dbReference type="EMBL" id="AK016512">
    <property type="protein sequence ID" value="BAC25485.1"/>
    <property type="status" value="ALT_SEQ"/>
    <property type="molecule type" value="mRNA"/>
</dbReference>
<dbReference type="EMBL" id="AC122771">
    <property type="status" value="NOT_ANNOTATED_CDS"/>
    <property type="molecule type" value="Genomic_DNA"/>
</dbReference>
<dbReference type="EMBL" id="BC145149">
    <property type="protein sequence ID" value="AAI45150.1"/>
    <property type="status" value="ALT_INIT"/>
    <property type="molecule type" value="mRNA"/>
</dbReference>
<dbReference type="EMBL" id="BC145786">
    <property type="protein sequence ID" value="AAI45787.1"/>
    <property type="molecule type" value="mRNA"/>
</dbReference>
<dbReference type="CCDS" id="CCDS48370.1">
    <molecule id="A6H684-1"/>
</dbReference>
<dbReference type="RefSeq" id="NP_001138772.1">
    <molecule id="A6H684-1"/>
    <property type="nucleotide sequence ID" value="NM_001145300.2"/>
</dbReference>
<dbReference type="RefSeq" id="NP_001277944.1">
    <molecule id="A6H684-2"/>
    <property type="nucleotide sequence ID" value="NM_001291015.1"/>
</dbReference>
<dbReference type="SMR" id="A6H684"/>
<dbReference type="STRING" id="10090.ENSMUSP00000133717"/>
<dbReference type="CAZy" id="GT54">
    <property type="family name" value="Glycosyltransferase Family 54"/>
</dbReference>
<dbReference type="SwissPalm" id="A6H684"/>
<dbReference type="PaxDb" id="10090-ENSMUSP00000133717"/>
<dbReference type="ProteomicsDB" id="295940">
    <molecule id="A6H684-1"/>
</dbReference>
<dbReference type="ProteomicsDB" id="295941">
    <molecule id="A6H684-2"/>
</dbReference>
<dbReference type="DNASU" id="71001"/>
<dbReference type="Ensembl" id="ENSMUST00000052911.8">
    <molecule id="A6H684-1"/>
    <property type="protein sequence ID" value="ENSMUSP00000125929.2"/>
    <property type="gene ID" value="ENSMUSG00000046367.11"/>
</dbReference>
<dbReference type="Ensembl" id="ENSMUST00000172898.2">
    <molecule id="A6H684-1"/>
    <property type="protein sequence ID" value="ENSMUSP00000133717.2"/>
    <property type="gene ID" value="ENSMUSG00000046367.11"/>
</dbReference>
<dbReference type="GeneID" id="71001"/>
<dbReference type="KEGG" id="mmu:71001"/>
<dbReference type="UCSC" id="uc007csd.3">
    <molecule id="A6H684-1"/>
    <property type="organism name" value="mouse"/>
</dbReference>
<dbReference type="AGR" id="MGI:1918251"/>
<dbReference type="CTD" id="71001"/>
<dbReference type="MGI" id="MGI:1918251">
    <property type="gene designation" value="Mgat4e"/>
</dbReference>
<dbReference type="VEuPathDB" id="HostDB:ENSMUSG00000046367"/>
<dbReference type="eggNOG" id="KOG3656">
    <property type="taxonomic scope" value="Eukaryota"/>
</dbReference>
<dbReference type="GeneTree" id="ENSGT00940000163751"/>
<dbReference type="HOGENOM" id="CLU_027046_3_0_1"/>
<dbReference type="InParanoid" id="A6H684"/>
<dbReference type="OMA" id="PLEDWQN"/>
<dbReference type="OrthoDB" id="2016523at2759"/>
<dbReference type="PhylomeDB" id="A6H684"/>
<dbReference type="TreeFam" id="TF324570"/>
<dbReference type="UniPathway" id="UPA00378"/>
<dbReference type="BioGRID-ORCS" id="71001">
    <property type="hits" value="1 hit in 76 CRISPR screens"/>
</dbReference>
<dbReference type="PRO" id="PR:A6H684"/>
<dbReference type="Proteomes" id="UP000000589">
    <property type="component" value="Chromosome 1"/>
</dbReference>
<dbReference type="RNAct" id="A6H684">
    <property type="molecule type" value="protein"/>
</dbReference>
<dbReference type="Bgee" id="ENSMUSG00000046367">
    <property type="expression patterns" value="Expressed in seminiferous tubule of testis and 14 other cell types or tissues"/>
</dbReference>
<dbReference type="ExpressionAtlas" id="A6H684">
    <property type="expression patterns" value="baseline and differential"/>
</dbReference>
<dbReference type="GO" id="GO:0016757">
    <property type="term" value="F:glycosyltransferase activity"/>
    <property type="evidence" value="ECO:0007669"/>
    <property type="project" value="UniProtKB-KW"/>
</dbReference>
<dbReference type="GO" id="GO:0006486">
    <property type="term" value="P:protein glycosylation"/>
    <property type="evidence" value="ECO:0007669"/>
    <property type="project" value="UniProtKB-UniPathway"/>
</dbReference>
<dbReference type="InterPro" id="IPR006759">
    <property type="entry name" value="Glyco_transf_54"/>
</dbReference>
<dbReference type="InterPro" id="IPR056576">
    <property type="entry name" value="MGAT4_A/B/C_C"/>
</dbReference>
<dbReference type="PANTHER" id="PTHR12062:SF11">
    <property type="entry name" value="ALPHA-1,3-MANNOSYL-GLYCOPROTEIN 4-BETA-N-ACETYLGLUCOSAMINYLTRANSFERASE-LIKE PROTEIN MGAT4E"/>
    <property type="match status" value="1"/>
</dbReference>
<dbReference type="PANTHER" id="PTHR12062">
    <property type="entry name" value="N-ACETYLGLUCOSAMINYLTRANSFERASE VI"/>
    <property type="match status" value="1"/>
</dbReference>
<dbReference type="Pfam" id="PF04666">
    <property type="entry name" value="MGAT4_cons"/>
    <property type="match status" value="1"/>
</dbReference>
<dbReference type="Pfam" id="PF23524">
    <property type="entry name" value="MGAT4A_C"/>
    <property type="match status" value="1"/>
</dbReference>
<protein>
    <recommendedName>
        <fullName evidence="3">Alpha-1,3-mannosyl-glycoprotein 4-beta-N-acetylglucosaminyltransferase-like protein MGAT4E</fullName>
        <ecNumber>2.4.1.-</ecNumber>
    </recommendedName>
</protein>
<proteinExistence type="evidence at transcript level"/>